<protein>
    <recommendedName>
        <fullName evidence="1">RNA-binding protein Hfq</fullName>
    </recommendedName>
</protein>
<name>HFQ_BACAA</name>
<sequence length="74" mass="8646">MKQSINIQDQFLNQLRKENTFVTLYLLNGFQLRGLIKGFDNFTVLLETEGKQQLIYKHAISTFVPQKNVSIELE</sequence>
<organism>
    <name type="scientific">Bacillus anthracis (strain A0248)</name>
    <dbReference type="NCBI Taxonomy" id="592021"/>
    <lineage>
        <taxon>Bacteria</taxon>
        <taxon>Bacillati</taxon>
        <taxon>Bacillota</taxon>
        <taxon>Bacilli</taxon>
        <taxon>Bacillales</taxon>
        <taxon>Bacillaceae</taxon>
        <taxon>Bacillus</taxon>
        <taxon>Bacillus cereus group</taxon>
    </lineage>
</organism>
<accession>C3P4Y3</accession>
<evidence type="ECO:0000255" key="1">
    <source>
        <dbReference type="HAMAP-Rule" id="MF_00436"/>
    </source>
</evidence>
<evidence type="ECO:0000255" key="2">
    <source>
        <dbReference type="PROSITE-ProRule" id="PRU01346"/>
    </source>
</evidence>
<comment type="function">
    <text evidence="1">RNA chaperone that binds small regulatory RNA (sRNAs) and mRNAs to facilitate mRNA translational regulation in response to envelope stress, environmental stress and changes in metabolite concentrations. Also binds with high specificity to tRNAs.</text>
</comment>
<comment type="subunit">
    <text evidence="1">Homohexamer.</text>
</comment>
<comment type="similarity">
    <text evidence="1">Belongs to the Hfq family.</text>
</comment>
<proteinExistence type="inferred from homology"/>
<keyword id="KW-0694">RNA-binding</keyword>
<keyword id="KW-0346">Stress response</keyword>
<gene>
    <name evidence="1" type="primary">hfq</name>
    <name type="ordered locus">BAA_3865</name>
</gene>
<feature type="chain" id="PRO_1000135017" description="RNA-binding protein Hfq">
    <location>
        <begin position="1"/>
        <end position="74"/>
    </location>
</feature>
<feature type="domain" description="Sm" evidence="2">
    <location>
        <begin position="9"/>
        <end position="69"/>
    </location>
</feature>
<dbReference type="EMBL" id="CP001598">
    <property type="protein sequence ID" value="ACQ48483.1"/>
    <property type="molecule type" value="Genomic_DNA"/>
</dbReference>
<dbReference type="RefSeq" id="WP_000813896.1">
    <property type="nucleotide sequence ID" value="NC_012659.1"/>
</dbReference>
<dbReference type="SMR" id="C3P4Y3"/>
<dbReference type="GeneID" id="93007416"/>
<dbReference type="KEGG" id="bai:BAA_3865"/>
<dbReference type="HOGENOM" id="CLU_113688_3_0_9"/>
<dbReference type="GO" id="GO:0005829">
    <property type="term" value="C:cytosol"/>
    <property type="evidence" value="ECO:0007669"/>
    <property type="project" value="TreeGrafter"/>
</dbReference>
<dbReference type="GO" id="GO:0003723">
    <property type="term" value="F:RNA binding"/>
    <property type="evidence" value="ECO:0007669"/>
    <property type="project" value="UniProtKB-UniRule"/>
</dbReference>
<dbReference type="GO" id="GO:0006355">
    <property type="term" value="P:regulation of DNA-templated transcription"/>
    <property type="evidence" value="ECO:0007669"/>
    <property type="project" value="InterPro"/>
</dbReference>
<dbReference type="GO" id="GO:0043487">
    <property type="term" value="P:regulation of RNA stability"/>
    <property type="evidence" value="ECO:0007669"/>
    <property type="project" value="TreeGrafter"/>
</dbReference>
<dbReference type="GO" id="GO:0045974">
    <property type="term" value="P:regulation of translation, ncRNA-mediated"/>
    <property type="evidence" value="ECO:0007669"/>
    <property type="project" value="TreeGrafter"/>
</dbReference>
<dbReference type="CDD" id="cd01716">
    <property type="entry name" value="Hfq"/>
    <property type="match status" value="1"/>
</dbReference>
<dbReference type="FunFam" id="2.30.30.100:FF:000012">
    <property type="entry name" value="RNA-binding protein Hfq"/>
    <property type="match status" value="1"/>
</dbReference>
<dbReference type="Gene3D" id="2.30.30.100">
    <property type="match status" value="1"/>
</dbReference>
<dbReference type="HAMAP" id="MF_00436">
    <property type="entry name" value="Hfq"/>
    <property type="match status" value="1"/>
</dbReference>
<dbReference type="InterPro" id="IPR005001">
    <property type="entry name" value="Hfq"/>
</dbReference>
<dbReference type="InterPro" id="IPR010920">
    <property type="entry name" value="LSM_dom_sf"/>
</dbReference>
<dbReference type="InterPro" id="IPR047575">
    <property type="entry name" value="Sm"/>
</dbReference>
<dbReference type="NCBIfam" id="TIGR02383">
    <property type="entry name" value="Hfq"/>
    <property type="match status" value="1"/>
</dbReference>
<dbReference type="NCBIfam" id="NF001602">
    <property type="entry name" value="PRK00395.1"/>
    <property type="match status" value="1"/>
</dbReference>
<dbReference type="PANTHER" id="PTHR34772">
    <property type="entry name" value="RNA-BINDING PROTEIN HFQ"/>
    <property type="match status" value="1"/>
</dbReference>
<dbReference type="PANTHER" id="PTHR34772:SF1">
    <property type="entry name" value="RNA-BINDING PROTEIN HFQ"/>
    <property type="match status" value="1"/>
</dbReference>
<dbReference type="Pfam" id="PF17209">
    <property type="entry name" value="Hfq"/>
    <property type="match status" value="1"/>
</dbReference>
<dbReference type="SUPFAM" id="SSF50182">
    <property type="entry name" value="Sm-like ribonucleoproteins"/>
    <property type="match status" value="1"/>
</dbReference>
<dbReference type="PROSITE" id="PS52002">
    <property type="entry name" value="SM"/>
    <property type="match status" value="1"/>
</dbReference>
<reference key="1">
    <citation type="submission" date="2009-04" db="EMBL/GenBank/DDBJ databases">
        <title>Genome sequence of Bacillus anthracis A0248.</title>
        <authorList>
            <person name="Dodson R.J."/>
            <person name="Munk A.C."/>
            <person name="Bruce D."/>
            <person name="Detter C."/>
            <person name="Tapia R."/>
            <person name="Sutton G."/>
            <person name="Sims D."/>
            <person name="Brettin T."/>
        </authorList>
    </citation>
    <scope>NUCLEOTIDE SEQUENCE [LARGE SCALE GENOMIC DNA]</scope>
    <source>
        <strain>A0248</strain>
    </source>
</reference>